<dbReference type="EMBL" id="AC004747">
    <property type="protein sequence ID" value="AAC31232.1"/>
    <property type="molecule type" value="Genomic_DNA"/>
</dbReference>
<dbReference type="EMBL" id="CP002685">
    <property type="protein sequence ID" value="AEC07788.1"/>
    <property type="molecule type" value="Genomic_DNA"/>
</dbReference>
<dbReference type="PIR" id="T02619">
    <property type="entry name" value="T02619"/>
</dbReference>
<dbReference type="RefSeq" id="NP_180174.1">
    <property type="nucleotide sequence ID" value="NM_128163.2"/>
</dbReference>
<dbReference type="PDB" id="3KAZ">
    <property type="method" value="X-ray"/>
    <property type="resolution" value="1.85 A"/>
    <property type="chains" value="A/B/C=14-188"/>
</dbReference>
<dbReference type="PDB" id="3KB0">
    <property type="method" value="X-ray"/>
    <property type="resolution" value="1.95 A"/>
    <property type="chains" value="A=14-188"/>
</dbReference>
<dbReference type="PDB" id="3KB3">
    <property type="method" value="X-ray"/>
    <property type="resolution" value="1.95 A"/>
    <property type="chains" value="A=14-188"/>
</dbReference>
<dbReference type="PDB" id="3KDH">
    <property type="method" value="X-ray"/>
    <property type="resolution" value="1.65 A"/>
    <property type="chains" value="A/B/C=1-190"/>
</dbReference>
<dbReference type="PDB" id="3KDI">
    <property type="method" value="X-ray"/>
    <property type="resolution" value="2.38 A"/>
    <property type="chains" value="A=1-190"/>
</dbReference>
<dbReference type="PDB" id="3KL1">
    <property type="method" value="X-ray"/>
    <property type="resolution" value="1.55 A"/>
    <property type="chains" value="A/B=1-190"/>
</dbReference>
<dbReference type="PDB" id="3NJ0">
    <property type="method" value="X-ray"/>
    <property type="resolution" value="1.89 A"/>
    <property type="chains" value="A/B/C=1-190"/>
</dbReference>
<dbReference type="PDB" id="3NJ1">
    <property type="method" value="X-ray"/>
    <property type="resolution" value="1.95 A"/>
    <property type="chains" value="A=1-190"/>
</dbReference>
<dbReference type="PDB" id="3NMH">
    <property type="method" value="X-ray"/>
    <property type="resolution" value="1.85 A"/>
    <property type="chains" value="A/B/C=14-189"/>
</dbReference>
<dbReference type="PDB" id="3NMP">
    <property type="method" value="X-ray"/>
    <property type="resolution" value="2.10 A"/>
    <property type="chains" value="A/B/C=14-189"/>
</dbReference>
<dbReference type="PDB" id="3NMT">
    <property type="method" value="X-ray"/>
    <property type="resolution" value="2.56 A"/>
    <property type="chains" value="A=14-189"/>
</dbReference>
<dbReference type="PDB" id="3NMV">
    <property type="method" value="X-ray"/>
    <property type="resolution" value="2.10 A"/>
    <property type="chains" value="A=14-189"/>
</dbReference>
<dbReference type="PDB" id="3NR4">
    <property type="method" value="X-ray"/>
    <property type="resolution" value="2.01 A"/>
    <property type="chains" value="A/B/C=1-190"/>
</dbReference>
<dbReference type="PDB" id="3NS2">
    <property type="method" value="X-ray"/>
    <property type="resolution" value="1.63 A"/>
    <property type="chains" value="A/B/C=1-190"/>
</dbReference>
<dbReference type="PDB" id="3UJL">
    <property type="method" value="X-ray"/>
    <property type="resolution" value="2.50 A"/>
    <property type="chains" value="A=14-188"/>
</dbReference>
<dbReference type="PDB" id="4LA7">
    <property type="method" value="X-ray"/>
    <property type="resolution" value="1.98 A"/>
    <property type="chains" value="A=1-190"/>
</dbReference>
<dbReference type="PDB" id="4LG5">
    <property type="method" value="X-ray"/>
    <property type="resolution" value="2.88 A"/>
    <property type="chains" value="A=14-188"/>
</dbReference>
<dbReference type="PDB" id="4LGA">
    <property type="method" value="X-ray"/>
    <property type="resolution" value="2.70 A"/>
    <property type="chains" value="A=14-188"/>
</dbReference>
<dbReference type="PDB" id="4LGB">
    <property type="method" value="X-ray"/>
    <property type="resolution" value="3.15 A"/>
    <property type="chains" value="A=14-188"/>
</dbReference>
<dbReference type="PDB" id="5JNN">
    <property type="method" value="X-ray"/>
    <property type="resolution" value="2.30 A"/>
    <property type="chains" value="A=1-190"/>
</dbReference>
<dbReference type="PDB" id="5VR7">
    <property type="method" value="X-ray"/>
    <property type="resolution" value="2.61 A"/>
    <property type="chains" value="A=14-188"/>
</dbReference>
<dbReference type="PDB" id="5VRO">
    <property type="method" value="X-ray"/>
    <property type="resolution" value="2.26 A"/>
    <property type="chains" value="A=14-188"/>
</dbReference>
<dbReference type="PDB" id="5VS5">
    <property type="method" value="X-ray"/>
    <property type="resolution" value="2.80 A"/>
    <property type="chains" value="A=14-188"/>
</dbReference>
<dbReference type="PDB" id="5VSQ">
    <property type="method" value="X-ray"/>
    <property type="resolution" value="2.62 A"/>
    <property type="chains" value="A=14-188"/>
</dbReference>
<dbReference type="PDB" id="5VSR">
    <property type="method" value="X-ray"/>
    <property type="resolution" value="2.62 A"/>
    <property type="chains" value="A=14-188"/>
</dbReference>
<dbReference type="PDB" id="5VT7">
    <property type="method" value="X-ray"/>
    <property type="resolution" value="2.62 A"/>
    <property type="chains" value="A=14-188"/>
</dbReference>
<dbReference type="PDB" id="7MWN">
    <property type="method" value="X-ray"/>
    <property type="resolution" value="1.90 A"/>
    <property type="chains" value="A=1-190"/>
</dbReference>
<dbReference type="PDBsum" id="3KAZ"/>
<dbReference type="PDBsum" id="3KB0"/>
<dbReference type="PDBsum" id="3KB3"/>
<dbReference type="PDBsum" id="3KDH"/>
<dbReference type="PDBsum" id="3KDI"/>
<dbReference type="PDBsum" id="3KL1"/>
<dbReference type="PDBsum" id="3NJ0"/>
<dbReference type="PDBsum" id="3NJ1"/>
<dbReference type="PDBsum" id="3NMH"/>
<dbReference type="PDBsum" id="3NMP"/>
<dbReference type="PDBsum" id="3NMT"/>
<dbReference type="PDBsum" id="3NMV"/>
<dbReference type="PDBsum" id="3NR4"/>
<dbReference type="PDBsum" id="3NS2"/>
<dbReference type="PDBsum" id="3UJL"/>
<dbReference type="PDBsum" id="4LA7"/>
<dbReference type="PDBsum" id="4LG5"/>
<dbReference type="PDBsum" id="4LGA"/>
<dbReference type="PDBsum" id="4LGB"/>
<dbReference type="PDBsum" id="5JNN"/>
<dbReference type="PDBsum" id="5VR7"/>
<dbReference type="PDBsum" id="5VRO"/>
<dbReference type="PDBsum" id="5VS5"/>
<dbReference type="PDBsum" id="5VSQ"/>
<dbReference type="PDBsum" id="5VSR"/>
<dbReference type="PDBsum" id="5VT7"/>
<dbReference type="PDBsum" id="7MWN"/>
<dbReference type="SMR" id="O80992"/>
<dbReference type="BioGRID" id="2497">
    <property type="interactions" value="7"/>
</dbReference>
<dbReference type="ComplexPortal" id="CPX-3562">
    <property type="entry name" value="PYL2 ABA receptor complex"/>
</dbReference>
<dbReference type="DIP" id="DIP-48582N"/>
<dbReference type="FunCoup" id="O80992">
    <property type="interactions" value="365"/>
</dbReference>
<dbReference type="IntAct" id="O80992">
    <property type="interactions" value="6"/>
</dbReference>
<dbReference type="STRING" id="3702.O80992"/>
<dbReference type="BindingDB" id="O80992"/>
<dbReference type="MetOSite" id="O80992"/>
<dbReference type="PaxDb" id="3702-AT2G26040.1"/>
<dbReference type="ProteomicsDB" id="226009"/>
<dbReference type="EnsemblPlants" id="AT2G26040.1">
    <property type="protein sequence ID" value="AT2G26040.1"/>
    <property type="gene ID" value="AT2G26040"/>
</dbReference>
<dbReference type="GeneID" id="817145"/>
<dbReference type="Gramene" id="AT2G26040.1">
    <property type="protein sequence ID" value="AT2G26040.1"/>
    <property type="gene ID" value="AT2G26040"/>
</dbReference>
<dbReference type="KEGG" id="ath:AT2G26040"/>
<dbReference type="Araport" id="AT2G26040"/>
<dbReference type="TAIR" id="AT2G26040">
    <property type="gene designation" value="PYL2"/>
</dbReference>
<dbReference type="eggNOG" id="ENOG502QU62">
    <property type="taxonomic scope" value="Eukaryota"/>
</dbReference>
<dbReference type="HOGENOM" id="CLU_077517_0_1_1"/>
<dbReference type="InParanoid" id="O80992"/>
<dbReference type="OMA" id="GCNMRGD"/>
<dbReference type="PhylomeDB" id="O80992"/>
<dbReference type="EvolutionaryTrace" id="O80992"/>
<dbReference type="PRO" id="PR:O80992"/>
<dbReference type="Proteomes" id="UP000006548">
    <property type="component" value="Chromosome 2"/>
</dbReference>
<dbReference type="ExpressionAtlas" id="O80992">
    <property type="expression patterns" value="baseline and differential"/>
</dbReference>
<dbReference type="GO" id="GO:0005737">
    <property type="term" value="C:cytoplasm"/>
    <property type="evidence" value="ECO:0000250"/>
    <property type="project" value="UniProtKB"/>
</dbReference>
<dbReference type="GO" id="GO:0005634">
    <property type="term" value="C:nucleus"/>
    <property type="evidence" value="ECO:0000250"/>
    <property type="project" value="UniProtKB"/>
</dbReference>
<dbReference type="GO" id="GO:0005886">
    <property type="term" value="C:plasma membrane"/>
    <property type="evidence" value="ECO:0007669"/>
    <property type="project" value="UniProtKB-SubCell"/>
</dbReference>
<dbReference type="GO" id="GO:0062049">
    <property type="term" value="C:protein phosphatase inhibitor complex"/>
    <property type="evidence" value="ECO:0000353"/>
    <property type="project" value="ComplexPortal"/>
</dbReference>
<dbReference type="GO" id="GO:0010427">
    <property type="term" value="F:abscisic acid binding"/>
    <property type="evidence" value="ECO:0000250"/>
    <property type="project" value="UniProtKB"/>
</dbReference>
<dbReference type="GO" id="GO:0042802">
    <property type="term" value="F:identical protein binding"/>
    <property type="evidence" value="ECO:0000353"/>
    <property type="project" value="IntAct"/>
</dbReference>
<dbReference type="GO" id="GO:0042803">
    <property type="term" value="F:protein homodimerization activity"/>
    <property type="evidence" value="ECO:0000314"/>
    <property type="project" value="UniProtKB"/>
</dbReference>
<dbReference type="GO" id="GO:0004864">
    <property type="term" value="F:protein phosphatase inhibitor activity"/>
    <property type="evidence" value="ECO:0000314"/>
    <property type="project" value="UniProtKB"/>
</dbReference>
<dbReference type="GO" id="GO:0038023">
    <property type="term" value="F:signaling receptor activity"/>
    <property type="evidence" value="ECO:0000314"/>
    <property type="project" value="UniProtKB"/>
</dbReference>
<dbReference type="GO" id="GO:0009738">
    <property type="term" value="P:abscisic acid-activated signaling pathway"/>
    <property type="evidence" value="ECO:0000314"/>
    <property type="project" value="UniProtKB"/>
</dbReference>
<dbReference type="CDD" id="cd07821">
    <property type="entry name" value="PYR_PYL_RCAR_like"/>
    <property type="match status" value="1"/>
</dbReference>
<dbReference type="FunFam" id="3.30.530.20:FF:000019">
    <property type="entry name" value="Abscisic acid receptor PYR1"/>
    <property type="match status" value="1"/>
</dbReference>
<dbReference type="Gene3D" id="3.30.530.20">
    <property type="match status" value="1"/>
</dbReference>
<dbReference type="InterPro" id="IPR050279">
    <property type="entry name" value="Plant_def-hormone_signal"/>
</dbReference>
<dbReference type="InterPro" id="IPR019587">
    <property type="entry name" value="Polyketide_cyclase/dehydratase"/>
</dbReference>
<dbReference type="InterPro" id="IPR023393">
    <property type="entry name" value="START-like_dom_sf"/>
</dbReference>
<dbReference type="PANTHER" id="PTHR31213:SF212">
    <property type="entry name" value="ABSCISIC ACID RECEPTOR PYL2"/>
    <property type="match status" value="1"/>
</dbReference>
<dbReference type="PANTHER" id="PTHR31213">
    <property type="entry name" value="OS08G0374000 PROTEIN-RELATED"/>
    <property type="match status" value="1"/>
</dbReference>
<dbReference type="Pfam" id="PF10604">
    <property type="entry name" value="Polyketide_cyc2"/>
    <property type="match status" value="1"/>
</dbReference>
<dbReference type="SUPFAM" id="SSF55961">
    <property type="entry name" value="Bet v1-like"/>
    <property type="match status" value="1"/>
</dbReference>
<keyword id="KW-0002">3D-structure</keyword>
<keyword id="KW-0938">Abscisic acid signaling pathway</keyword>
<keyword id="KW-1003">Cell membrane</keyword>
<keyword id="KW-0963">Cytoplasm</keyword>
<keyword id="KW-0472">Membrane</keyword>
<keyword id="KW-0539">Nucleus</keyword>
<keyword id="KW-0650">Protein phosphatase inhibitor</keyword>
<keyword id="KW-0675">Receptor</keyword>
<keyword id="KW-1185">Reference proteome</keyword>
<protein>
    <recommendedName>
        <fullName>Abscisic acid receptor PYL2</fullName>
    </recommendedName>
    <alternativeName>
        <fullName>PYR1-like protein 2</fullName>
    </alternativeName>
    <alternativeName>
        <fullName>Regulatory components of ABA receptor 14</fullName>
    </alternativeName>
</protein>
<organism>
    <name type="scientific">Arabidopsis thaliana</name>
    <name type="common">Mouse-ear cress</name>
    <dbReference type="NCBI Taxonomy" id="3702"/>
    <lineage>
        <taxon>Eukaryota</taxon>
        <taxon>Viridiplantae</taxon>
        <taxon>Streptophyta</taxon>
        <taxon>Embryophyta</taxon>
        <taxon>Tracheophyta</taxon>
        <taxon>Spermatophyta</taxon>
        <taxon>Magnoliopsida</taxon>
        <taxon>eudicotyledons</taxon>
        <taxon>Gunneridae</taxon>
        <taxon>Pentapetalae</taxon>
        <taxon>rosids</taxon>
        <taxon>malvids</taxon>
        <taxon>Brassicales</taxon>
        <taxon>Brassicaceae</taxon>
        <taxon>Camelineae</taxon>
        <taxon>Arabidopsis</taxon>
    </lineage>
</organism>
<feature type="chain" id="PRO_0000391737" description="Abscisic acid receptor PYL2">
    <location>
        <begin position="1"/>
        <end position="190"/>
    </location>
</feature>
<feature type="region of interest" description="START-like">
    <location>
        <begin position="28"/>
        <end position="182"/>
    </location>
</feature>
<feature type="short sequence motif" description="Gate loop" evidence="7">
    <location>
        <begin position="89"/>
        <end position="93"/>
    </location>
</feature>
<feature type="short sequence motif" description="Latch loop" evidence="7">
    <location>
        <begin position="119"/>
        <end position="121"/>
    </location>
</feature>
<feature type="binding site" evidence="6 7">
    <location>
        <position position="64"/>
    </location>
    <ligand>
        <name>abscisate</name>
        <dbReference type="ChEBI" id="CHEBI:62432"/>
    </ligand>
</feature>
<feature type="binding site" evidence="6 7">
    <location>
        <begin position="93"/>
        <end position="98"/>
    </location>
    <ligand>
        <name>abscisate</name>
        <dbReference type="ChEBI" id="CHEBI:62432"/>
    </ligand>
</feature>
<feature type="binding site" evidence="6 7">
    <location>
        <begin position="120"/>
        <end position="126"/>
    </location>
    <ligand>
        <name>abscisate</name>
        <dbReference type="ChEBI" id="CHEBI:62432"/>
    </ligand>
</feature>
<feature type="binding site" evidence="6 7">
    <location>
        <position position="147"/>
    </location>
    <ligand>
        <name>abscisate</name>
        <dbReference type="ChEBI" id="CHEBI:62432"/>
    </ligand>
</feature>
<feature type="site" description="Involved in interactions with PP2Cs" evidence="1">
    <location>
        <position position="92"/>
    </location>
</feature>
<feature type="site" description="Involved in interactions with PP2Cs" evidence="1">
    <location>
        <position position="158"/>
    </location>
</feature>
<feature type="site" description="Involved in ABA binding" evidence="3">
    <location>
        <position position="166"/>
    </location>
</feature>
<feature type="mutagenesis site" description="Impaired ABA-mediated binding to PP2Cs and subsequent inhibition." evidence="6 7">
    <original>K</original>
    <variation>A</variation>
    <location>
        <position position="64"/>
    </location>
</feature>
<feature type="mutagenesis site" description="Impaired ABA-mediated binding to PP2Cs and subsequent inhibition." evidence="7">
    <original>V</original>
    <variation>A</variation>
    <location>
        <position position="87"/>
    </location>
</feature>
<feature type="mutagenesis site" description="Increased constitutive inhibition of PP2C phosphatase." evidence="8">
    <original>V</original>
    <variation>L</variation>
    <location>
        <position position="87"/>
    </location>
</feature>
<feature type="mutagenesis site" description="Monomer due to impaired homodimerization. Increased ABA-binding affinity and increased constitutive inhibition of PP2C phosphatase." evidence="8">
    <original>I</original>
    <variation>K</variation>
    <location>
        <position position="88"/>
    </location>
</feature>
<feature type="mutagenesis site" description="Impaired ABA-mediated binding to PP2Cs and subsequent inhibition." evidence="7">
    <original>G</original>
    <variation>A</variation>
    <location>
        <position position="90"/>
    </location>
</feature>
<feature type="mutagenesis site" description="Impaired ABA-mediated binding to PP2Cs and subsequent inhibition." evidence="7">
    <original>L</original>
    <variation>A</variation>
    <location>
        <position position="91"/>
    </location>
</feature>
<feature type="mutagenesis site" description="Impaired ABA-mediated binding to PP2Cs and subsequent inhibition." evidence="7">
    <original>A</original>
    <variation>S</variation>
    <location>
        <position position="93"/>
    </location>
</feature>
<feature type="mutagenesis site" description="Impaired ABA-mediated binding to PP2Cs and subsequent inhibition." evidence="7">
    <original>E</original>
    <variation>A</variation>
    <location>
        <position position="98"/>
    </location>
</feature>
<feature type="mutagenesis site" description="Impaired ABA-mediated binding to PP2Cs and subsequent inhibition." evidence="7">
    <original>Y</original>
    <variation>A</variation>
    <location>
        <position position="124"/>
    </location>
</feature>
<feature type="mutagenesis site" description="Impaired ABA-mediated binding to PP2Cs and subsequent inhibition." evidence="7">
    <original>E</original>
    <variation>A</variation>
    <location>
        <position position="147"/>
    </location>
</feature>
<feature type="mutagenesis site" description="Impaired ABA-mediated binding to PP2Cs and subsequent inhibition." evidence="7">
    <original>V</original>
    <variation>A</variation>
    <location>
        <position position="151"/>
    </location>
</feature>
<feature type="mutagenesis site" description="Impaired ABA-mediated binding to PP2Cs and subsequent inhibition." evidence="7">
    <original>N</original>
    <variation>A</variation>
    <location>
        <position position="173"/>
    </location>
</feature>
<feature type="helix" evidence="11">
    <location>
        <begin position="12"/>
        <end position="25"/>
    </location>
</feature>
<feature type="strand" evidence="11">
    <location>
        <begin position="34"/>
        <end position="45"/>
    </location>
</feature>
<feature type="helix" evidence="11">
    <location>
        <begin position="47"/>
        <end position="55"/>
    </location>
</feature>
<feature type="helix" evidence="11">
    <location>
        <begin position="60"/>
        <end position="62"/>
    </location>
</feature>
<feature type="strand" evidence="11">
    <location>
        <begin position="65"/>
        <end position="78"/>
    </location>
</feature>
<feature type="strand" evidence="11">
    <location>
        <begin position="82"/>
        <end position="87"/>
    </location>
</feature>
<feature type="strand" evidence="11">
    <location>
        <begin position="89"/>
        <end position="92"/>
    </location>
</feature>
<feature type="strand" evidence="11">
    <location>
        <begin position="94"/>
        <end position="104"/>
    </location>
</feature>
<feature type="turn" evidence="11">
    <location>
        <begin position="105"/>
        <end position="108"/>
    </location>
</feature>
<feature type="strand" evidence="11">
    <location>
        <begin position="109"/>
        <end position="120"/>
    </location>
</feature>
<feature type="strand" evidence="11">
    <location>
        <begin position="125"/>
        <end position="134"/>
    </location>
</feature>
<feature type="turn" evidence="12">
    <location>
        <begin position="136"/>
        <end position="138"/>
    </location>
</feature>
<feature type="strand" evidence="11">
    <location>
        <begin position="141"/>
        <end position="152"/>
    </location>
</feature>
<feature type="helix" evidence="11">
    <location>
        <begin position="159"/>
        <end position="183"/>
    </location>
</feature>
<name>PYL2_ARATH</name>
<evidence type="ECO:0000250" key="1">
    <source>
        <dbReference type="UniProtKB" id="O49686"/>
    </source>
</evidence>
<evidence type="ECO:0000250" key="2">
    <source>
        <dbReference type="UniProtKB" id="O80920"/>
    </source>
</evidence>
<evidence type="ECO:0000250" key="3">
    <source>
        <dbReference type="UniProtKB" id="Q84MC7"/>
    </source>
</evidence>
<evidence type="ECO:0000250" key="4">
    <source>
        <dbReference type="UniProtKB" id="Q9FLB1"/>
    </source>
</evidence>
<evidence type="ECO:0000269" key="5">
    <source>
    </source>
</evidence>
<evidence type="ECO:0000269" key="6">
    <source>
    </source>
</evidence>
<evidence type="ECO:0000269" key="7">
    <source>
    </source>
</evidence>
<evidence type="ECO:0000269" key="8">
    <source>
    </source>
</evidence>
<evidence type="ECO:0000269" key="9">
    <source>
    </source>
</evidence>
<evidence type="ECO:0000305" key="10"/>
<evidence type="ECO:0007829" key="11">
    <source>
        <dbReference type="PDB" id="3KL1"/>
    </source>
</evidence>
<evidence type="ECO:0007829" key="12">
    <source>
        <dbReference type="PDB" id="3NS2"/>
    </source>
</evidence>
<sequence length="190" mass="21282">MSSSPAVKGLTDEEQKTLEPVIKTYHQFEPDPTTCTSLITQRIHAPASVVWPLIRRFDNPERYKHFVKRCRLISGDGDVGSVREVTVISGLPASTSTERLEFVDDDHRVLSFRVVGGEHRLKNYKSVTSVNEFLNQDSGKVYTVVLESYTVDIPEGNTEEDTKMFVDTVVKLNLQKLGVAATSAPMHDDE</sequence>
<proteinExistence type="evidence at protein level"/>
<reference key="1">
    <citation type="journal article" date="1999" name="Nature">
        <title>Sequence and analysis of chromosome 2 of the plant Arabidopsis thaliana.</title>
        <authorList>
            <person name="Lin X."/>
            <person name="Kaul S."/>
            <person name="Rounsley S.D."/>
            <person name="Shea T.P."/>
            <person name="Benito M.-I."/>
            <person name="Town C.D."/>
            <person name="Fujii C.Y."/>
            <person name="Mason T.M."/>
            <person name="Bowman C.L."/>
            <person name="Barnstead M.E."/>
            <person name="Feldblyum T.V."/>
            <person name="Buell C.R."/>
            <person name="Ketchum K.A."/>
            <person name="Lee J.J."/>
            <person name="Ronning C.M."/>
            <person name="Koo H.L."/>
            <person name="Moffat K.S."/>
            <person name="Cronin L.A."/>
            <person name="Shen M."/>
            <person name="Pai G."/>
            <person name="Van Aken S."/>
            <person name="Umayam L."/>
            <person name="Tallon L.J."/>
            <person name="Gill J.E."/>
            <person name="Adams M.D."/>
            <person name="Carrera A.J."/>
            <person name="Creasy T.H."/>
            <person name="Goodman H.M."/>
            <person name="Somerville C.R."/>
            <person name="Copenhaver G.P."/>
            <person name="Preuss D."/>
            <person name="Nierman W.C."/>
            <person name="White O."/>
            <person name="Eisen J.A."/>
            <person name="Salzberg S.L."/>
            <person name="Fraser C.M."/>
            <person name="Venter J.C."/>
        </authorList>
    </citation>
    <scope>NUCLEOTIDE SEQUENCE [LARGE SCALE GENOMIC DNA]</scope>
    <source>
        <strain>cv. Columbia</strain>
    </source>
</reference>
<reference key="2">
    <citation type="journal article" date="2017" name="Plant J.">
        <title>Araport11: a complete reannotation of the Arabidopsis thaliana reference genome.</title>
        <authorList>
            <person name="Cheng C.Y."/>
            <person name="Krishnakumar V."/>
            <person name="Chan A.P."/>
            <person name="Thibaud-Nissen F."/>
            <person name="Schobel S."/>
            <person name="Town C.D."/>
        </authorList>
    </citation>
    <scope>GENOME REANNOTATION</scope>
    <source>
        <strain>cv. Columbia</strain>
    </source>
</reference>
<reference key="3">
    <citation type="journal article" date="2009" name="Science">
        <title>Regulators of PP2C phosphatase activity function as abscisic acid sensors.</title>
        <authorList>
            <person name="Ma Y."/>
            <person name="Szostkiewicz I."/>
            <person name="Korte A."/>
            <person name="Moes D."/>
            <person name="Yang Y."/>
            <person name="Christmann A."/>
            <person name="Grill E."/>
        </authorList>
    </citation>
    <scope>GENE FAMILY</scope>
</reference>
<reference key="4">
    <citation type="journal article" date="2009" name="Science">
        <title>Abscisic acid inhibits type 2C protein phosphatases via the PYR/PYL family of START proteins.</title>
        <authorList>
            <person name="Park S.-Y."/>
            <person name="Fung P."/>
            <person name="Nishimura N."/>
            <person name="Jensen D.R."/>
            <person name="Fujii H."/>
            <person name="Zhao Y."/>
            <person name="Lumba S."/>
            <person name="Santiago J."/>
            <person name="Rodrigues A."/>
            <person name="Chow T.F."/>
            <person name="Alfred S.E."/>
            <person name="Bonetta D."/>
            <person name="Finkelstein R."/>
            <person name="Provart N.J."/>
            <person name="Desveaux D."/>
            <person name="Rodriguez P.L."/>
            <person name="McCourt P."/>
            <person name="Zhu J.-K."/>
            <person name="Schroeder J.I."/>
            <person name="Volkman B.F."/>
            <person name="Cutler S.R."/>
        </authorList>
    </citation>
    <scope>INTERACTION WITH HAB1</scope>
    <scope>GENE FAMILY</scope>
    <scope>NOMENCLATURE</scope>
</reference>
<reference key="5">
    <citation type="journal article" date="2011" name="Mol. Cell">
        <title>The molecular basis of ABA-independent inhibition of PP2Cs by a subclass of PYL proteins.</title>
        <authorList>
            <person name="Hao Q."/>
            <person name="Yin P."/>
            <person name="Li W."/>
            <person name="Wang L."/>
            <person name="Yan C."/>
            <person name="Lin Z."/>
            <person name="Wu J.Z."/>
            <person name="Wang J."/>
            <person name="Yan S.F."/>
            <person name="Yan N."/>
        </authorList>
    </citation>
    <scope>FUNCTION</scope>
    <scope>MUTAGENESIS OF VAL-87 AND ILE-88</scope>
    <scope>HOMODIMER</scope>
    <scope>GENE FAMILY</scope>
</reference>
<reference key="6">
    <citation type="journal article" date="2013" name="PLoS ONE">
        <title>Structural insights into the abscisic acid stereospecificity by the ABA receptors PYR/PYL/RCAR.</title>
        <authorList>
            <person name="Zhang X."/>
            <person name="Jiang L."/>
            <person name="Wang G."/>
            <person name="Yu L."/>
            <person name="Zhang Q."/>
            <person name="Xin Q."/>
            <person name="Wu W."/>
            <person name="Gong Z."/>
            <person name="Chen Z."/>
        </authorList>
    </citation>
    <scope>FUNCTION</scope>
    <scope>GENE FAMILY</scope>
</reference>
<reference key="7">
    <citation type="journal article" date="2009" name="Nature">
        <title>A gate-latch-lock mechanism for hormone signalling by abscisic acid receptors.</title>
        <authorList>
            <person name="Melcher K."/>
            <person name="Ng L.-M."/>
            <person name="Zhou X.E."/>
            <person name="Soon F.-F."/>
            <person name="Xu Y."/>
            <person name="Suino-Powell K.M."/>
            <person name="Park S.-Y."/>
            <person name="Weiner J.J."/>
            <person name="Fujii H."/>
            <person name="Chinnusamy V."/>
            <person name="Kovach A."/>
            <person name="Li J."/>
            <person name="Wang Y."/>
            <person name="Li J."/>
            <person name="Peterson F.C."/>
            <person name="Jensen D.R."/>
            <person name="Yong E.-L."/>
            <person name="Volkman B.F."/>
            <person name="Cutler S.R."/>
            <person name="Zhu J.-K."/>
            <person name="Xu H.E."/>
        </authorList>
    </citation>
    <scope>X-RAY CRYSTALLOGRAPHY (1.85 ANGSTROMS) OF 14-188 IN COMPLEX WITH ABSCISIC ACID AND PP2C HAB1</scope>
    <scope>DIMERIZATION</scope>
    <scope>FUNCTION</scope>
    <scope>INTERACTION WITH HAB1; ABI1 AND ABI2</scope>
    <scope>GATE AND LATCH MOTIFS</scope>
    <scope>MUTAGENESIS OF LYS-64; VAL-87; GLY-90; LEU-91; ALA-93; GLU-98; TYR-124; GLU-147; VAL-151 AND ASN-173</scope>
    <scope>DOMAIN</scope>
</reference>
<reference key="8">
    <citation type="journal article" date="2009" name="Nat. Struct. Mol. Biol.">
        <title>Structural insights into the mechanism of abscisic acid signaling by PYL proteins.</title>
        <authorList>
            <person name="Yin P."/>
            <person name="Fan H."/>
            <person name="Hao Q."/>
            <person name="Yuan X."/>
            <person name="Wu D."/>
            <person name="Pang Y."/>
            <person name="Yan C."/>
            <person name="Li W."/>
            <person name="Wang J."/>
            <person name="Yan N."/>
        </authorList>
    </citation>
    <scope>X-RAY CRYSTALLOGRAPHY (1.65 ANGSTROMS) ALONE AND IN COMPLEX WITH ABSCISIC ACID</scope>
    <scope>FUNCTION</scope>
    <scope>INTERACTION WITH ABI1</scope>
    <scope>MUTAGENESIS OF LYS-64</scope>
</reference>
<gene>
    <name type="primary">PYL2</name>
    <name type="synonym">RCAR14</name>
    <name type="ordered locus">At2g26040</name>
    <name type="ORF">T19L18.15</name>
</gene>
<comment type="function">
    <text evidence="6 7 8 9">Receptor for abscisic acid (ABA) required for ABA-mediated responses such as stomatal closure and germination inhibition. Inhibits the activity of group-A protein phosphatases type 2C (PP2Cs) when activated by ABA (PubMed:19893533, PubMed:19898420, PubMed:21658606, PubMed:23844015). Can be activated by both (-)-ABA and (+)-ABA (PubMed:23844015).</text>
</comment>
<comment type="subunit">
    <text evidence="1 5 6 7 8">Homodimer (PubMed:19898420, PubMed:21658606). Binds ABA on one subunit only. Interacts with HAB1, ABI1 and ABI2, and possibly with other PP2Cs (PubMed:19407142, PubMed:19893533, PubMed:19898420). Binds to CARs protein in an ABA-independent manner, both at the plasma membrane and in the nucleus (By similarity).</text>
</comment>
<comment type="interaction">
    <interactant intactId="EBI-2363125">
        <id>O80992</id>
    </interactant>
    <interactant intactId="EBI-782526">
        <id>P49597</id>
        <label>ABI1</label>
    </interactant>
    <organismsDiffer>false</organismsDiffer>
    <experiments>6</experiments>
</comment>
<comment type="interaction">
    <interactant intactId="EBI-2363125">
        <id>O80992</id>
    </interactant>
    <interactant intactId="EBI-15803514">
        <id>O04719-1</id>
        <label>ABI2</label>
    </interactant>
    <organismsDiffer>false</organismsDiffer>
    <experiments>3</experiments>
</comment>
<comment type="interaction">
    <interactant intactId="EBI-2363125">
        <id>O80992</id>
    </interactant>
    <interactant intactId="EBI-1573499">
        <id>Q9LNW3</id>
        <label>AIP1</label>
    </interactant>
    <organismsDiffer>false</organismsDiffer>
    <experiments>3</experiments>
</comment>
<comment type="interaction">
    <interactant intactId="EBI-2363125">
        <id>O80992</id>
    </interactant>
    <interactant intactId="EBI-2309302">
        <id>Q9CAJ0</id>
        <label>HAB1</label>
    </interactant>
    <organismsDiffer>false</organismsDiffer>
    <experiments>10</experiments>
</comment>
<comment type="interaction">
    <interactant intactId="EBI-2363125">
        <id>O80992</id>
    </interactant>
    <interactant intactId="EBI-2363125">
        <id>O80992</id>
        <label>PYL2</label>
    </interactant>
    <organismsDiffer>false</organismsDiffer>
    <experiments>4</experiments>
</comment>
<comment type="interaction">
    <interactant intactId="EBI-2363125">
        <id>O80992</id>
    </interactant>
    <interactant intactId="EBI-4426178">
        <id>Q9LT89</id>
        <label>TCP19</label>
    </interactant>
    <organismsDiffer>false</organismsDiffer>
    <experiments>3</experiments>
</comment>
<comment type="subcellular location">
    <subcellularLocation>
        <location evidence="4">Cytoplasm</location>
    </subcellularLocation>
    <subcellularLocation>
        <location evidence="1">Nucleus</location>
    </subcellularLocation>
    <subcellularLocation>
        <location evidence="1">Cell membrane</location>
    </subcellularLocation>
    <text evidence="2">Localizes at the plasma membrane in the presence of a CAR protein.</text>
</comment>
<comment type="domain">
    <text evidence="7">Upon interaction with ABA, the 'latch' and 'gate' loops change in conformation leading to a tight dimerization and the creation a surface that enables the receptor to dock into and inhibit the PP2C active site.</text>
</comment>
<comment type="similarity">
    <text evidence="10">Belongs to the PYR/PYL/RCAR abscisic acid intracellular receptor family.</text>
</comment>
<accession>O80992</accession>